<organism>
    <name type="scientific">Oryza sativa subsp. japonica</name>
    <name type="common">Rice</name>
    <dbReference type="NCBI Taxonomy" id="39947"/>
    <lineage>
        <taxon>Eukaryota</taxon>
        <taxon>Viridiplantae</taxon>
        <taxon>Streptophyta</taxon>
        <taxon>Embryophyta</taxon>
        <taxon>Tracheophyta</taxon>
        <taxon>Spermatophyta</taxon>
        <taxon>Magnoliopsida</taxon>
        <taxon>Liliopsida</taxon>
        <taxon>Poales</taxon>
        <taxon>Poaceae</taxon>
        <taxon>BOP clade</taxon>
        <taxon>Oryzoideae</taxon>
        <taxon>Oryzeae</taxon>
        <taxon>Oryzinae</taxon>
        <taxon>Oryza</taxon>
        <taxon>Oryza sativa</taxon>
    </lineage>
</organism>
<evidence type="ECO:0000250" key="1"/>
<evidence type="ECO:0000255" key="2">
    <source>
        <dbReference type="PROSITE-ProRule" id="PRU00326"/>
    </source>
</evidence>
<evidence type="ECO:0000255" key="3">
    <source>
        <dbReference type="PROSITE-ProRule" id="PRU01081"/>
    </source>
</evidence>
<evidence type="ECO:0000256" key="4">
    <source>
        <dbReference type="SAM" id="MobiDB-lite"/>
    </source>
</evidence>
<evidence type="ECO:0000269" key="5">
    <source>
    </source>
</evidence>
<evidence type="ECO:0000305" key="6"/>
<proteinExistence type="evidence at transcript level"/>
<protein>
    <recommendedName>
        <fullName>Auxin response factor 22</fullName>
    </recommendedName>
</protein>
<name>ARFV_ORYSJ</name>
<feature type="chain" id="PRO_0000299281" description="Auxin response factor 22">
    <location>
        <begin position="1"/>
        <end position="698"/>
    </location>
</feature>
<feature type="domain" description="PB1" evidence="3">
    <location>
        <begin position="603"/>
        <end position="683"/>
    </location>
</feature>
<feature type="DNA-binding region" description="TF-B3" evidence="2">
    <location>
        <begin position="128"/>
        <end position="230"/>
    </location>
</feature>
<feature type="region of interest" description="Disordered" evidence="4">
    <location>
        <begin position="549"/>
        <end position="579"/>
    </location>
</feature>
<feature type="compositionally biased region" description="Polar residues" evidence="4">
    <location>
        <begin position="549"/>
        <end position="577"/>
    </location>
</feature>
<dbReference type="EMBL" id="AC024594">
    <property type="protein sequence ID" value="AAK21342.1"/>
    <property type="molecule type" value="Genomic_DNA"/>
</dbReference>
<dbReference type="EMBL" id="DP000086">
    <property type="protein sequence ID" value="AAP54297.2"/>
    <property type="status" value="ALT_SEQ"/>
    <property type="molecule type" value="Genomic_DNA"/>
</dbReference>
<dbReference type="EMBL" id="AP008216">
    <property type="protein sequence ID" value="BAF26786.2"/>
    <property type="status" value="ALT_SEQ"/>
    <property type="molecule type" value="Genomic_DNA"/>
</dbReference>
<dbReference type="EMBL" id="AP014966">
    <property type="protein sequence ID" value="BAT11328.1"/>
    <property type="molecule type" value="Genomic_DNA"/>
</dbReference>
<dbReference type="EMBL" id="AK318617">
    <property type="status" value="NOT_ANNOTATED_CDS"/>
    <property type="molecule type" value="mRNA"/>
</dbReference>
<dbReference type="RefSeq" id="XP_015614842.1">
    <property type="nucleotide sequence ID" value="XM_015759356.1"/>
</dbReference>
<dbReference type="SMR" id="Q9AV47"/>
<dbReference type="FunCoup" id="Q9AV47">
    <property type="interactions" value="152"/>
</dbReference>
<dbReference type="STRING" id="39947.Q9AV47"/>
<dbReference type="PaxDb" id="39947-Q9AV47"/>
<dbReference type="EnsemblPlants" id="Os10t0479900-01">
    <property type="protein sequence ID" value="Os10t0479900-01"/>
    <property type="gene ID" value="Os10g0479900"/>
</dbReference>
<dbReference type="Gramene" id="Os10t0479900-01">
    <property type="protein sequence ID" value="Os10t0479900-01"/>
    <property type="gene ID" value="Os10g0479900"/>
</dbReference>
<dbReference type="KEGG" id="dosa:Os10g0479900"/>
<dbReference type="eggNOG" id="ENOG502QQ5I">
    <property type="taxonomic scope" value="Eukaryota"/>
</dbReference>
<dbReference type="HOGENOM" id="CLU_002626_3_5_1"/>
<dbReference type="InParanoid" id="Q9AV47"/>
<dbReference type="OMA" id="ACGGMEC"/>
<dbReference type="OrthoDB" id="1906869at2759"/>
<dbReference type="PlantReactome" id="R-OSA-5608118">
    <property type="pathway name" value="Auxin signalling"/>
</dbReference>
<dbReference type="Proteomes" id="UP000000763">
    <property type="component" value="Chromosome 10"/>
</dbReference>
<dbReference type="Proteomes" id="UP000059680">
    <property type="component" value="Chromosome 10"/>
</dbReference>
<dbReference type="GO" id="GO:0005634">
    <property type="term" value="C:nucleus"/>
    <property type="evidence" value="ECO:0007669"/>
    <property type="project" value="UniProtKB-SubCell"/>
</dbReference>
<dbReference type="GO" id="GO:0003677">
    <property type="term" value="F:DNA binding"/>
    <property type="evidence" value="ECO:0007669"/>
    <property type="project" value="UniProtKB-KW"/>
</dbReference>
<dbReference type="GO" id="GO:0009734">
    <property type="term" value="P:auxin-activated signaling pathway"/>
    <property type="evidence" value="ECO:0007669"/>
    <property type="project" value="UniProtKB-KW"/>
</dbReference>
<dbReference type="GO" id="GO:0006355">
    <property type="term" value="P:regulation of DNA-templated transcription"/>
    <property type="evidence" value="ECO:0007669"/>
    <property type="project" value="InterPro"/>
</dbReference>
<dbReference type="CDD" id="cd10017">
    <property type="entry name" value="B3_DNA"/>
    <property type="match status" value="1"/>
</dbReference>
<dbReference type="FunFam" id="2.30.30.1040:FF:000002">
    <property type="entry name" value="Auxin response factor"/>
    <property type="match status" value="1"/>
</dbReference>
<dbReference type="FunFam" id="2.40.330.10:FF:000001">
    <property type="entry name" value="Auxin response factor"/>
    <property type="match status" value="1"/>
</dbReference>
<dbReference type="Gene3D" id="2.30.30.1040">
    <property type="match status" value="1"/>
</dbReference>
<dbReference type="Gene3D" id="2.40.330.10">
    <property type="entry name" value="DNA-binding pseudobarrel domain"/>
    <property type="match status" value="1"/>
</dbReference>
<dbReference type="Gene3D" id="3.10.20.90">
    <property type="entry name" value="Phosphatidylinositol 3-kinase Catalytic Subunit, Chain A, domain 1"/>
    <property type="match status" value="1"/>
</dbReference>
<dbReference type="InterPro" id="IPR010525">
    <property type="entry name" value="ARF_dom"/>
</dbReference>
<dbReference type="InterPro" id="IPR044835">
    <property type="entry name" value="ARF_plant"/>
</dbReference>
<dbReference type="InterPro" id="IPR003340">
    <property type="entry name" value="B3_DNA-bd"/>
</dbReference>
<dbReference type="InterPro" id="IPR015300">
    <property type="entry name" value="DNA-bd_pseudobarrel_sf"/>
</dbReference>
<dbReference type="InterPro" id="IPR053793">
    <property type="entry name" value="PB1-like"/>
</dbReference>
<dbReference type="PANTHER" id="PTHR31384:SF165">
    <property type="entry name" value="AUXIN RESPONSE FACTOR 22"/>
    <property type="match status" value="1"/>
</dbReference>
<dbReference type="PANTHER" id="PTHR31384">
    <property type="entry name" value="AUXIN RESPONSE FACTOR 4-RELATED"/>
    <property type="match status" value="1"/>
</dbReference>
<dbReference type="Pfam" id="PF06507">
    <property type="entry name" value="ARF_AD"/>
    <property type="match status" value="1"/>
</dbReference>
<dbReference type="Pfam" id="PF02362">
    <property type="entry name" value="B3"/>
    <property type="match status" value="1"/>
</dbReference>
<dbReference type="SMART" id="SM01019">
    <property type="entry name" value="B3"/>
    <property type="match status" value="1"/>
</dbReference>
<dbReference type="SUPFAM" id="SSF101936">
    <property type="entry name" value="DNA-binding pseudobarrel domain"/>
    <property type="match status" value="1"/>
</dbReference>
<dbReference type="PROSITE" id="PS50863">
    <property type="entry name" value="B3"/>
    <property type="match status" value="1"/>
</dbReference>
<dbReference type="PROSITE" id="PS51745">
    <property type="entry name" value="PB1"/>
    <property type="match status" value="1"/>
</dbReference>
<sequence>MKEVGEVEEVRCLDPQLWHACAGGMVQMPAPRSRVYYFAQGHAEHADGGGGAAAAAAELGPRALPPLVLCRVEGVQFLADRDSDEVYAKIRLAPVAPGEAEFREPDELCPLGAAGDAAEPSPEKPTSFAKTLTQSDANNGGGFSVPRYCAETIFPKLDYRADPPVQTVLAKDVHGVVWKFRHIYRGTPRRHLLTTGWSTFVNQKKLVAGDSIVFLRTRHGELCVGIRRAKRMACGGMECMSGWNAPGYGGGGFSAFLKEEESKLMKGHGGGGYMKGKGKVRMADVVEAASLASSGQPFEVAYYPRASTPDFVVKAASVQAAMRIQWCSGMRFKMAFETEDSSRISWFMGTISSVQVADPNRWPNSPWRLLQVTWDEPDLLQNVKCVSPWLVELVSSIPPIHLGPFSSPRKKLRVPPHPDFPFEGHLLNPIFHGNPLGPSNSPLCCYPDTAPAGIQGARHAQFGLPLTDHQLNKLHLGLLHSGSFNRLDAITPPSRISKGFVVSSAPAHDNISCLLSISTPQVAEKSDDRKTTPHIMLFGKAIFTEQQITSSGSTETLSPGVTGNSSPNGNAHKTGNASDGSGSSICIGFSSQGHEASDLGLEAGHCKVFMESEDVGRTIDLSVFGSYEELYGRLADMFGIEKEEIINHLHFRDAAGVVKHPGEVPFSDFMKAARRLTIIAGDRERIERPLIECLVEQA</sequence>
<comment type="function">
    <text>Auxin response factors (ARFs) are transcriptional factors that bind specifically to the DNA sequence 5'-TGTCTC-3' found in the auxin-responsive promoter elements (AuxREs).</text>
</comment>
<comment type="subunit">
    <text evidence="1">Homodimers and heterodimers.</text>
</comment>
<comment type="subcellular location">
    <subcellularLocation>
        <location evidence="2">Nucleus</location>
    </subcellularLocation>
</comment>
<comment type="tissue specificity">
    <text evidence="5">Expressed in roots, culms, leaves and young panicles.</text>
</comment>
<comment type="domain">
    <text>Interactions between auxin response factors (ARFs) and Aux/IAA proteins occur through their C-terminal dimerization domains III and IV.</text>
</comment>
<comment type="similarity">
    <text evidence="6">Belongs to the ARF family.</text>
</comment>
<comment type="sequence caution" evidence="6">
    <conflict type="erroneous gene model prediction">
        <sequence resource="EMBL-CDS" id="AAP54297"/>
    </conflict>
</comment>
<comment type="sequence caution" evidence="6">
    <conflict type="erroneous gene model prediction">
        <sequence resource="EMBL-CDS" id="BAF26786"/>
    </conflict>
</comment>
<gene>
    <name type="primary">ARF22</name>
    <name type="ordered locus">Os10g0479900</name>
    <name type="ordered locus">LOC_Os10g33940</name>
    <name type="ORF">OSJNBa0093B11.2</name>
</gene>
<keyword id="KW-0927">Auxin signaling pathway</keyword>
<keyword id="KW-0238">DNA-binding</keyword>
<keyword id="KW-0539">Nucleus</keyword>
<keyword id="KW-1185">Reference proteome</keyword>
<keyword id="KW-0804">Transcription</keyword>
<keyword id="KW-0805">Transcription regulation</keyword>
<accession>Q9AV47</accession>
<accession>A0A0P0XVF4</accession>
<accession>Q7XDB4</accession>
<reference key="1">
    <citation type="journal article" date="2003" name="Science">
        <title>In-depth view of structure, activity, and evolution of rice chromosome 10.</title>
        <authorList>
            <person name="Yu Y."/>
            <person name="Rambo T."/>
            <person name="Currie J."/>
            <person name="Saski C."/>
            <person name="Kim H.-R."/>
            <person name="Collura K."/>
            <person name="Thompson S."/>
            <person name="Simmons J."/>
            <person name="Yang T.-J."/>
            <person name="Nah G."/>
            <person name="Patel A.J."/>
            <person name="Thurmond S."/>
            <person name="Henry D."/>
            <person name="Oates R."/>
            <person name="Palmer M."/>
            <person name="Pries G."/>
            <person name="Gibson J."/>
            <person name="Anderson H."/>
            <person name="Paradkar M."/>
            <person name="Crane L."/>
            <person name="Dale J."/>
            <person name="Carver M.B."/>
            <person name="Wood T."/>
            <person name="Frisch D."/>
            <person name="Engler F."/>
            <person name="Soderlund C."/>
            <person name="Palmer L.E."/>
            <person name="Teytelman L."/>
            <person name="Nascimento L."/>
            <person name="De la Bastide M."/>
            <person name="Spiegel L."/>
            <person name="Ware D."/>
            <person name="O'Shaughnessy A."/>
            <person name="Dike S."/>
            <person name="Dedhia N."/>
            <person name="Preston R."/>
            <person name="Huang E."/>
            <person name="Ferraro K."/>
            <person name="Kuit K."/>
            <person name="Miller B."/>
            <person name="Zutavern T."/>
            <person name="Katzenberger F."/>
            <person name="Muller S."/>
            <person name="Balija V."/>
            <person name="Martienssen R.A."/>
            <person name="Stein L."/>
            <person name="Minx P."/>
            <person name="Johnson D."/>
            <person name="Cordum H."/>
            <person name="Mardis E."/>
            <person name="Cheng Z."/>
            <person name="Jiang J."/>
            <person name="Wilson R."/>
            <person name="McCombie W.R."/>
            <person name="Wing R.A."/>
            <person name="Yuan Q."/>
            <person name="Ouyang S."/>
            <person name="Liu J."/>
            <person name="Jones K.M."/>
            <person name="Gansberger K."/>
            <person name="Moffat K."/>
            <person name="Hill J."/>
            <person name="Tsitrin T."/>
            <person name="Overton L."/>
            <person name="Bera J."/>
            <person name="Kim M."/>
            <person name="Jin S."/>
            <person name="Tallon L."/>
            <person name="Ciecko A."/>
            <person name="Pai G."/>
            <person name="Van Aken S."/>
            <person name="Utterback T."/>
            <person name="Reidmuller S."/>
            <person name="Bormann J."/>
            <person name="Feldblyum T."/>
            <person name="Hsiao J."/>
            <person name="Zismann V."/>
            <person name="Blunt S."/>
            <person name="de Vazeille A.R."/>
            <person name="Shaffer T."/>
            <person name="Koo H."/>
            <person name="Suh B."/>
            <person name="Yang Q."/>
            <person name="Haas B."/>
            <person name="Peterson J."/>
            <person name="Pertea M."/>
            <person name="Volfovsky N."/>
            <person name="Wortman J."/>
            <person name="White O."/>
            <person name="Salzberg S.L."/>
            <person name="Fraser C.M."/>
            <person name="Buell C.R."/>
            <person name="Messing J."/>
            <person name="Song R."/>
            <person name="Fuks G."/>
            <person name="Llaca V."/>
            <person name="Kovchak S."/>
            <person name="Young S."/>
            <person name="Bowers J.E."/>
            <person name="Paterson A.H."/>
            <person name="Johns M.A."/>
            <person name="Mao L."/>
            <person name="Pan H."/>
            <person name="Dean R.A."/>
        </authorList>
    </citation>
    <scope>NUCLEOTIDE SEQUENCE [LARGE SCALE GENOMIC DNA]</scope>
    <source>
        <strain>cv. Nipponbare</strain>
    </source>
</reference>
<reference key="2">
    <citation type="journal article" date="2005" name="Nature">
        <title>The map-based sequence of the rice genome.</title>
        <authorList>
            <consortium name="International rice genome sequencing project (IRGSP)"/>
        </authorList>
    </citation>
    <scope>NUCLEOTIDE SEQUENCE [LARGE SCALE GENOMIC DNA]</scope>
    <source>
        <strain>cv. Nipponbare</strain>
    </source>
</reference>
<reference key="3">
    <citation type="journal article" date="2008" name="Nucleic Acids Res.">
        <title>The rice annotation project database (RAP-DB): 2008 update.</title>
        <authorList>
            <consortium name="The rice annotation project (RAP)"/>
        </authorList>
    </citation>
    <scope>GENOME REANNOTATION</scope>
    <source>
        <strain>cv. Nipponbare</strain>
    </source>
</reference>
<reference key="4">
    <citation type="journal article" date="2013" name="Rice">
        <title>Improvement of the Oryza sativa Nipponbare reference genome using next generation sequence and optical map data.</title>
        <authorList>
            <person name="Kawahara Y."/>
            <person name="de la Bastide M."/>
            <person name="Hamilton J.P."/>
            <person name="Kanamori H."/>
            <person name="McCombie W.R."/>
            <person name="Ouyang S."/>
            <person name="Schwartz D.C."/>
            <person name="Tanaka T."/>
            <person name="Wu J."/>
            <person name="Zhou S."/>
            <person name="Childs K.L."/>
            <person name="Davidson R.M."/>
            <person name="Lin H."/>
            <person name="Quesada-Ocampo L."/>
            <person name="Vaillancourt B."/>
            <person name="Sakai H."/>
            <person name="Lee S.S."/>
            <person name="Kim J."/>
            <person name="Numa H."/>
            <person name="Itoh T."/>
            <person name="Buell C.R."/>
            <person name="Matsumoto T."/>
        </authorList>
    </citation>
    <scope>GENOME REANNOTATION</scope>
    <source>
        <strain>cv. Nipponbare</strain>
    </source>
</reference>
<reference key="5">
    <citation type="submission" date="2008-11" db="EMBL/GenBank/DDBJ databases">
        <title>Oryza sativa full length cDNA.</title>
        <authorList>
            <consortium name="The rice full-length cDNA consortium"/>
        </authorList>
    </citation>
    <scope>NUCLEOTIDE SEQUENCE [LARGE SCALE MRNA]</scope>
    <source>
        <strain>cv. Nipponbare</strain>
    </source>
</reference>
<reference key="6">
    <citation type="journal article" date="2007" name="Gene">
        <title>Genome-wide analysis of the auxin response factors (ARF) gene family in rice (Oryza sativa).</title>
        <authorList>
            <person name="Wang D."/>
            <person name="Pei K."/>
            <person name="Fu Y."/>
            <person name="Sun Z."/>
            <person name="Li S."/>
            <person name="Liu H."/>
            <person name="Tang K."/>
            <person name="Han B."/>
            <person name="Tao Y."/>
        </authorList>
    </citation>
    <scope>GENE FAMILY</scope>
    <scope>TISSUE SPECIFICITY</scope>
    <scope>NOMENCLATURE</scope>
</reference>